<sequence length="757" mass="85201">MADSSSSLHPLCERISHKSYVLRAVDLTILGLLYSLLLYRILHISENDNVWLLAFFCESCFSLVWLIFTCLKWSPAEDIPYINTLNERVHDLPSLDMFVPTADTVRESPIITVNTVLSLLAVNYPANKLACYVSDDGCSPLTYFSLKEASKFVKIWAPFCKKYNVRVRAPFRYFLNPLVATDDSVFSKDWKMMKREYVKLCRKVEDATGDSHWLDADDDFEAFSNTKPNDHSTIVKVVWENKGGVGDEKEVPHLVYISREKRPNYLHHYKTGAMNFLLRVSGLMTNAPYTLNVDCDMYANEPDVVRQAMCVFLQNSKNSNHCAFVQFPQKFYDSYTNELAVLQSILGRGVAGIQGPFYIGTGCFHTRRVMYGLSSDDLEDNGNISQVATREFLAEDSLVRKYGNSKELVKSVVDALQRKSNPQKSLANLIEAAQEVGHCHYEYQTSWGNLGWMYDSVAEDINTSVGIHLRGWTSSFISPDPPAFIGSTPTLGLEAIVQQRRWATGAIEVLFNKQSPFMGMFHGKIKFRQRLAYFWALMCLRSIPELIYCLLPAYCLLHDSALFPKGPCLCTIVTLVGMHCLYSLWQFMSLGFSVQSWYVVQSLWRIIATSSWLFSIQDIILKLLGISQIGFVIAKKTIPETKSVYESKPSQGEDDVPKLNLGKFEFDSSGLFIPGTFIMLVNLAALAGYLVRLQRSSCSHGGGGSGLAEACGCILVVMLFLPFLKGLFEHGKYSIPLSTLSKAAFLTVLFVFFCVGK</sequence>
<dbReference type="EC" id="2.4.1.-"/>
<dbReference type="EMBL" id="Z97338">
    <property type="protein sequence ID" value="CAB10308.1"/>
    <property type="status" value="ALT_SEQ"/>
    <property type="molecule type" value="Genomic_DNA"/>
</dbReference>
<dbReference type="EMBL" id="AL161541">
    <property type="protein sequence ID" value="CAB78571.1"/>
    <property type="status" value="ALT_SEQ"/>
    <property type="molecule type" value="Genomic_DNA"/>
</dbReference>
<dbReference type="EMBL" id="CP002687">
    <property type="protein sequence ID" value="AEE83581.1"/>
    <property type="molecule type" value="Genomic_DNA"/>
</dbReference>
<dbReference type="EMBL" id="AK227722">
    <property type="protein sequence ID" value="BAE99708.1"/>
    <property type="molecule type" value="mRNA"/>
</dbReference>
<dbReference type="EMBL" id="BT010152">
    <property type="protein sequence ID" value="AAQ22621.1"/>
    <property type="molecule type" value="mRNA"/>
</dbReference>
<dbReference type="PIR" id="B71417">
    <property type="entry name" value="B71417"/>
</dbReference>
<dbReference type="SMR" id="Q0WT40"/>
<dbReference type="STRING" id="3702.Q0WT40"/>
<dbReference type="CAZy" id="GT2">
    <property type="family name" value="Glycosyltransferase Family 2"/>
</dbReference>
<dbReference type="PaxDb" id="3702-AT4G15290.1"/>
<dbReference type="ProteomicsDB" id="220362"/>
<dbReference type="EnsemblPlants" id="AT4G15290.1">
    <property type="protein sequence ID" value="AT4G15290.1"/>
    <property type="gene ID" value="AT4G15290"/>
</dbReference>
<dbReference type="GeneID" id="827195"/>
<dbReference type="Gramene" id="AT4G15290.1">
    <property type="protein sequence ID" value="AT4G15290.1"/>
    <property type="gene ID" value="AT4G15290"/>
</dbReference>
<dbReference type="KEGG" id="ath:AT4G15290"/>
<dbReference type="Araport" id="AT4G15290"/>
<dbReference type="TAIR" id="AT4G15290">
    <property type="gene designation" value="ATCSLB05"/>
</dbReference>
<dbReference type="eggNOG" id="ENOG502QTT0">
    <property type="taxonomic scope" value="Eukaryota"/>
</dbReference>
<dbReference type="HOGENOM" id="CLU_001418_3_3_1"/>
<dbReference type="InParanoid" id="Q0WT40"/>
<dbReference type="OMA" id="DEGTIMR"/>
<dbReference type="PhylomeDB" id="Q0WT40"/>
<dbReference type="BioCyc" id="ARA:AT4G15290-MONOMER"/>
<dbReference type="PRO" id="PR:Q0WT40"/>
<dbReference type="Proteomes" id="UP000006548">
    <property type="component" value="Chromosome 4"/>
</dbReference>
<dbReference type="ExpressionAtlas" id="Q0WT40">
    <property type="expression patterns" value="baseline and differential"/>
</dbReference>
<dbReference type="GO" id="GO:0000139">
    <property type="term" value="C:Golgi membrane"/>
    <property type="evidence" value="ECO:0007669"/>
    <property type="project" value="UniProtKB-SubCell"/>
</dbReference>
<dbReference type="GO" id="GO:0016760">
    <property type="term" value="F:cellulose synthase (UDP-forming) activity"/>
    <property type="evidence" value="ECO:0007669"/>
    <property type="project" value="InterPro"/>
</dbReference>
<dbReference type="GO" id="GO:0071555">
    <property type="term" value="P:cell wall organization"/>
    <property type="evidence" value="ECO:0007669"/>
    <property type="project" value="UniProtKB-KW"/>
</dbReference>
<dbReference type="GO" id="GO:0030244">
    <property type="term" value="P:cellulose biosynthetic process"/>
    <property type="evidence" value="ECO:0007669"/>
    <property type="project" value="InterPro"/>
</dbReference>
<dbReference type="GO" id="GO:0048767">
    <property type="term" value="P:root hair elongation"/>
    <property type="evidence" value="ECO:0000315"/>
    <property type="project" value="TAIR"/>
</dbReference>
<dbReference type="FunFam" id="3.90.550.10:FF:000162">
    <property type="entry name" value="Cellulose synthase-like B6"/>
    <property type="match status" value="1"/>
</dbReference>
<dbReference type="Gene3D" id="3.90.550.10">
    <property type="entry name" value="Spore Coat Polysaccharide Biosynthesis Protein SpsA, Chain A"/>
    <property type="match status" value="1"/>
</dbReference>
<dbReference type="InterPro" id="IPR005150">
    <property type="entry name" value="Cellulose_synth"/>
</dbReference>
<dbReference type="InterPro" id="IPR029044">
    <property type="entry name" value="Nucleotide-diphossugar_trans"/>
</dbReference>
<dbReference type="PANTHER" id="PTHR13301">
    <property type="entry name" value="X-BOX TRANSCRIPTION FACTOR-RELATED"/>
    <property type="match status" value="1"/>
</dbReference>
<dbReference type="Pfam" id="PF03552">
    <property type="entry name" value="Cellulose_synt"/>
    <property type="match status" value="1"/>
</dbReference>
<dbReference type="SUPFAM" id="SSF53448">
    <property type="entry name" value="Nucleotide-diphospho-sugar transferases"/>
    <property type="match status" value="1"/>
</dbReference>
<reference key="1">
    <citation type="journal article" date="1998" name="Nature">
        <title>Analysis of 1.9 Mb of contiguous sequence from chromosome 4 of Arabidopsis thaliana.</title>
        <authorList>
            <person name="Bevan M."/>
            <person name="Bancroft I."/>
            <person name="Bent E."/>
            <person name="Love K."/>
            <person name="Goodman H.M."/>
            <person name="Dean C."/>
            <person name="Bergkamp R."/>
            <person name="Dirkse W."/>
            <person name="van Staveren M."/>
            <person name="Stiekema W."/>
            <person name="Drost L."/>
            <person name="Ridley P."/>
            <person name="Hudson S.-A."/>
            <person name="Patel K."/>
            <person name="Murphy G."/>
            <person name="Piffanelli P."/>
            <person name="Wedler H."/>
            <person name="Wedler E."/>
            <person name="Wambutt R."/>
            <person name="Weitzenegger T."/>
            <person name="Pohl T."/>
            <person name="Terryn N."/>
            <person name="Gielen J."/>
            <person name="Villarroel R."/>
            <person name="De Clercq R."/>
            <person name="van Montagu M."/>
            <person name="Lecharny A."/>
            <person name="Aubourg S."/>
            <person name="Gy I."/>
            <person name="Kreis M."/>
            <person name="Lao N."/>
            <person name="Kavanagh T."/>
            <person name="Hempel S."/>
            <person name="Kotter P."/>
            <person name="Entian K.-D."/>
            <person name="Rieger M."/>
            <person name="Schaefer M."/>
            <person name="Funk B."/>
            <person name="Mueller-Auer S."/>
            <person name="Silvey M."/>
            <person name="James R."/>
            <person name="Monfort A."/>
            <person name="Pons A."/>
            <person name="Puigdomenech P."/>
            <person name="Douka A."/>
            <person name="Voukelatou E."/>
            <person name="Milioni D."/>
            <person name="Hatzopoulos P."/>
            <person name="Piravandi E."/>
            <person name="Obermaier B."/>
            <person name="Hilbert H."/>
            <person name="Duesterhoeft A."/>
            <person name="Moores T."/>
            <person name="Jones J.D.G."/>
            <person name="Eneva T."/>
            <person name="Palme K."/>
            <person name="Benes V."/>
            <person name="Rechmann S."/>
            <person name="Ansorge W."/>
            <person name="Cooke R."/>
            <person name="Berger C."/>
            <person name="Delseny M."/>
            <person name="Voet M."/>
            <person name="Volckaert G."/>
            <person name="Mewes H.-W."/>
            <person name="Klosterman S."/>
            <person name="Schueller C."/>
            <person name="Chalwatzis N."/>
        </authorList>
    </citation>
    <scope>NUCLEOTIDE SEQUENCE [LARGE SCALE GENOMIC DNA]</scope>
    <source>
        <strain>cv. Columbia</strain>
    </source>
</reference>
<reference key="2">
    <citation type="journal article" date="1999" name="Nature">
        <title>Sequence and analysis of chromosome 4 of the plant Arabidopsis thaliana.</title>
        <authorList>
            <person name="Mayer K.F.X."/>
            <person name="Schueller C."/>
            <person name="Wambutt R."/>
            <person name="Murphy G."/>
            <person name="Volckaert G."/>
            <person name="Pohl T."/>
            <person name="Duesterhoeft A."/>
            <person name="Stiekema W."/>
            <person name="Entian K.-D."/>
            <person name="Terryn N."/>
            <person name="Harris B."/>
            <person name="Ansorge W."/>
            <person name="Brandt P."/>
            <person name="Grivell L.A."/>
            <person name="Rieger M."/>
            <person name="Weichselgartner M."/>
            <person name="de Simone V."/>
            <person name="Obermaier B."/>
            <person name="Mache R."/>
            <person name="Mueller M."/>
            <person name="Kreis M."/>
            <person name="Delseny M."/>
            <person name="Puigdomenech P."/>
            <person name="Watson M."/>
            <person name="Schmidtheini T."/>
            <person name="Reichert B."/>
            <person name="Portetelle D."/>
            <person name="Perez-Alonso M."/>
            <person name="Boutry M."/>
            <person name="Bancroft I."/>
            <person name="Vos P."/>
            <person name="Hoheisel J."/>
            <person name="Zimmermann W."/>
            <person name="Wedler H."/>
            <person name="Ridley P."/>
            <person name="Langham S.-A."/>
            <person name="McCullagh B."/>
            <person name="Bilham L."/>
            <person name="Robben J."/>
            <person name="van der Schueren J."/>
            <person name="Grymonprez B."/>
            <person name="Chuang Y.-J."/>
            <person name="Vandenbussche F."/>
            <person name="Braeken M."/>
            <person name="Weltjens I."/>
            <person name="Voet M."/>
            <person name="Bastiaens I."/>
            <person name="Aert R."/>
            <person name="Defoor E."/>
            <person name="Weitzenegger T."/>
            <person name="Bothe G."/>
            <person name="Ramsperger U."/>
            <person name="Hilbert H."/>
            <person name="Braun M."/>
            <person name="Holzer E."/>
            <person name="Brandt A."/>
            <person name="Peters S."/>
            <person name="van Staveren M."/>
            <person name="Dirkse W."/>
            <person name="Mooijman P."/>
            <person name="Klein Lankhorst R."/>
            <person name="Rose M."/>
            <person name="Hauf J."/>
            <person name="Koetter P."/>
            <person name="Berneiser S."/>
            <person name="Hempel S."/>
            <person name="Feldpausch M."/>
            <person name="Lamberth S."/>
            <person name="Van den Daele H."/>
            <person name="De Keyser A."/>
            <person name="Buysshaert C."/>
            <person name="Gielen J."/>
            <person name="Villarroel R."/>
            <person name="De Clercq R."/>
            <person name="van Montagu M."/>
            <person name="Rogers J."/>
            <person name="Cronin A."/>
            <person name="Quail M.A."/>
            <person name="Bray-Allen S."/>
            <person name="Clark L."/>
            <person name="Doggett J."/>
            <person name="Hall S."/>
            <person name="Kay M."/>
            <person name="Lennard N."/>
            <person name="McLay K."/>
            <person name="Mayes R."/>
            <person name="Pettett A."/>
            <person name="Rajandream M.A."/>
            <person name="Lyne M."/>
            <person name="Benes V."/>
            <person name="Rechmann S."/>
            <person name="Borkova D."/>
            <person name="Bloecker H."/>
            <person name="Scharfe M."/>
            <person name="Grimm M."/>
            <person name="Loehnert T.-H."/>
            <person name="Dose S."/>
            <person name="de Haan M."/>
            <person name="Maarse A.C."/>
            <person name="Schaefer M."/>
            <person name="Mueller-Auer S."/>
            <person name="Gabel C."/>
            <person name="Fuchs M."/>
            <person name="Fartmann B."/>
            <person name="Granderath K."/>
            <person name="Dauner D."/>
            <person name="Herzl A."/>
            <person name="Neumann S."/>
            <person name="Argiriou A."/>
            <person name="Vitale D."/>
            <person name="Liguori R."/>
            <person name="Piravandi E."/>
            <person name="Massenet O."/>
            <person name="Quigley F."/>
            <person name="Clabauld G."/>
            <person name="Muendlein A."/>
            <person name="Felber R."/>
            <person name="Schnabl S."/>
            <person name="Hiller R."/>
            <person name="Schmidt W."/>
            <person name="Lecharny A."/>
            <person name="Aubourg S."/>
            <person name="Chefdor F."/>
            <person name="Cooke R."/>
            <person name="Berger C."/>
            <person name="Monfort A."/>
            <person name="Casacuberta E."/>
            <person name="Gibbons T."/>
            <person name="Weber N."/>
            <person name="Vandenbol M."/>
            <person name="Bargues M."/>
            <person name="Terol J."/>
            <person name="Torres A."/>
            <person name="Perez-Perez A."/>
            <person name="Purnelle B."/>
            <person name="Bent E."/>
            <person name="Johnson S."/>
            <person name="Tacon D."/>
            <person name="Jesse T."/>
            <person name="Heijnen L."/>
            <person name="Schwarz S."/>
            <person name="Scholler P."/>
            <person name="Heber S."/>
            <person name="Francs P."/>
            <person name="Bielke C."/>
            <person name="Frishman D."/>
            <person name="Haase D."/>
            <person name="Lemcke K."/>
            <person name="Mewes H.-W."/>
            <person name="Stocker S."/>
            <person name="Zaccaria P."/>
            <person name="Bevan M."/>
            <person name="Wilson R.K."/>
            <person name="de la Bastide M."/>
            <person name="Habermann K."/>
            <person name="Parnell L."/>
            <person name="Dedhia N."/>
            <person name="Gnoj L."/>
            <person name="Schutz K."/>
            <person name="Huang E."/>
            <person name="Spiegel L."/>
            <person name="Sekhon M."/>
            <person name="Murray J."/>
            <person name="Sheet P."/>
            <person name="Cordes M."/>
            <person name="Abu-Threideh J."/>
            <person name="Stoneking T."/>
            <person name="Kalicki J."/>
            <person name="Graves T."/>
            <person name="Harmon G."/>
            <person name="Edwards J."/>
            <person name="Latreille P."/>
            <person name="Courtney L."/>
            <person name="Cloud J."/>
            <person name="Abbott A."/>
            <person name="Scott K."/>
            <person name="Johnson D."/>
            <person name="Minx P."/>
            <person name="Bentley D."/>
            <person name="Fulton B."/>
            <person name="Miller N."/>
            <person name="Greco T."/>
            <person name="Kemp K."/>
            <person name="Kramer J."/>
            <person name="Fulton L."/>
            <person name="Mardis E."/>
            <person name="Dante M."/>
            <person name="Pepin K."/>
            <person name="Hillier L.W."/>
            <person name="Nelson J."/>
            <person name="Spieth J."/>
            <person name="Ryan E."/>
            <person name="Andrews S."/>
            <person name="Geisel C."/>
            <person name="Layman D."/>
            <person name="Du H."/>
            <person name="Ali J."/>
            <person name="Berghoff A."/>
            <person name="Jones K."/>
            <person name="Drone K."/>
            <person name="Cotton M."/>
            <person name="Joshu C."/>
            <person name="Antonoiu B."/>
            <person name="Zidanic M."/>
            <person name="Strong C."/>
            <person name="Sun H."/>
            <person name="Lamar B."/>
            <person name="Yordan C."/>
            <person name="Ma P."/>
            <person name="Zhong J."/>
            <person name="Preston R."/>
            <person name="Vil D."/>
            <person name="Shekher M."/>
            <person name="Matero A."/>
            <person name="Shah R."/>
            <person name="Swaby I.K."/>
            <person name="O'Shaughnessy A."/>
            <person name="Rodriguez M."/>
            <person name="Hoffman J."/>
            <person name="Till S."/>
            <person name="Granat S."/>
            <person name="Shohdy N."/>
            <person name="Hasegawa A."/>
            <person name="Hameed A."/>
            <person name="Lodhi M."/>
            <person name="Johnson A."/>
            <person name="Chen E."/>
            <person name="Marra M.A."/>
            <person name="Martienssen R."/>
            <person name="McCombie W.R."/>
        </authorList>
    </citation>
    <scope>NUCLEOTIDE SEQUENCE [LARGE SCALE GENOMIC DNA]</scope>
    <source>
        <strain>cv. Columbia</strain>
    </source>
</reference>
<reference key="3">
    <citation type="journal article" date="2017" name="Plant J.">
        <title>Araport11: a complete reannotation of the Arabidopsis thaliana reference genome.</title>
        <authorList>
            <person name="Cheng C.Y."/>
            <person name="Krishnakumar V."/>
            <person name="Chan A.P."/>
            <person name="Thibaud-Nissen F."/>
            <person name="Schobel S."/>
            <person name="Town C.D."/>
        </authorList>
    </citation>
    <scope>GENOME REANNOTATION</scope>
    <source>
        <strain>cv. Columbia</strain>
    </source>
</reference>
<reference key="4">
    <citation type="submission" date="2006-07" db="EMBL/GenBank/DDBJ databases">
        <title>Large-scale analysis of RIKEN Arabidopsis full-length (RAFL) cDNAs.</title>
        <authorList>
            <person name="Totoki Y."/>
            <person name="Seki M."/>
            <person name="Ishida J."/>
            <person name="Nakajima M."/>
            <person name="Enju A."/>
            <person name="Kamiya A."/>
            <person name="Narusaka M."/>
            <person name="Shin-i T."/>
            <person name="Nakagawa M."/>
            <person name="Sakamoto N."/>
            <person name="Oishi K."/>
            <person name="Kohara Y."/>
            <person name="Kobayashi M."/>
            <person name="Toyoda A."/>
            <person name="Sakaki Y."/>
            <person name="Sakurai T."/>
            <person name="Iida K."/>
            <person name="Akiyama K."/>
            <person name="Satou M."/>
            <person name="Toyoda T."/>
            <person name="Konagaya A."/>
            <person name="Carninci P."/>
            <person name="Kawai J."/>
            <person name="Hayashizaki Y."/>
            <person name="Shinozaki K."/>
        </authorList>
    </citation>
    <scope>NUCLEOTIDE SEQUENCE [LARGE SCALE MRNA]</scope>
    <source>
        <strain>cv. Columbia</strain>
    </source>
</reference>
<reference key="5">
    <citation type="journal article" date="2003" name="Science">
        <title>Empirical analysis of transcriptional activity in the Arabidopsis genome.</title>
        <authorList>
            <person name="Yamada K."/>
            <person name="Lim J."/>
            <person name="Dale J.M."/>
            <person name="Chen H."/>
            <person name="Shinn P."/>
            <person name="Palm C.J."/>
            <person name="Southwick A.M."/>
            <person name="Wu H.C."/>
            <person name="Kim C.J."/>
            <person name="Nguyen M."/>
            <person name="Pham P.K."/>
            <person name="Cheuk R.F."/>
            <person name="Karlin-Newmann G."/>
            <person name="Liu S.X."/>
            <person name="Lam B."/>
            <person name="Sakano H."/>
            <person name="Wu T."/>
            <person name="Yu G."/>
            <person name="Miranda M."/>
            <person name="Quach H.L."/>
            <person name="Tripp M."/>
            <person name="Chang C.H."/>
            <person name="Lee J.M."/>
            <person name="Toriumi M.J."/>
            <person name="Chan M.M."/>
            <person name="Tang C.C."/>
            <person name="Onodera C.S."/>
            <person name="Deng J.M."/>
            <person name="Akiyama K."/>
            <person name="Ansari Y."/>
            <person name="Arakawa T."/>
            <person name="Banh J."/>
            <person name="Banno F."/>
            <person name="Bowser L."/>
            <person name="Brooks S.Y."/>
            <person name="Carninci P."/>
            <person name="Chao Q."/>
            <person name="Choy N."/>
            <person name="Enju A."/>
            <person name="Goldsmith A.D."/>
            <person name="Gurjal M."/>
            <person name="Hansen N.F."/>
            <person name="Hayashizaki Y."/>
            <person name="Johnson-Hopson C."/>
            <person name="Hsuan V.W."/>
            <person name="Iida K."/>
            <person name="Karnes M."/>
            <person name="Khan S."/>
            <person name="Koesema E."/>
            <person name="Ishida J."/>
            <person name="Jiang P.X."/>
            <person name="Jones T."/>
            <person name="Kawai J."/>
            <person name="Kamiya A."/>
            <person name="Meyers C."/>
            <person name="Nakajima M."/>
            <person name="Narusaka M."/>
            <person name="Seki M."/>
            <person name="Sakurai T."/>
            <person name="Satou M."/>
            <person name="Tamse R."/>
            <person name="Vaysberg M."/>
            <person name="Wallender E.K."/>
            <person name="Wong C."/>
            <person name="Yamamura Y."/>
            <person name="Yuan S."/>
            <person name="Shinozaki K."/>
            <person name="Davis R.W."/>
            <person name="Theologis A."/>
            <person name="Ecker J.R."/>
        </authorList>
    </citation>
    <scope>NUCLEOTIDE SEQUENCE [LARGE SCALE MRNA] OF 97-757</scope>
    <source>
        <strain>cv. Columbia</strain>
    </source>
</reference>
<reference key="6">
    <citation type="journal article" date="2000" name="Plant Physiol.">
        <title>The cellulose synthase superfamily.</title>
        <authorList>
            <person name="Richmond T.A."/>
            <person name="Somerville C.R."/>
        </authorList>
    </citation>
    <scope>GENE FAMILY</scope>
    <scope>NOMENCLATURE</scope>
</reference>
<reference key="7">
    <citation type="journal article" date="2001" name="Plant Mol. Biol.">
        <title>Integrative approaches to determining Csl function.</title>
        <authorList>
            <person name="Richmond T.A."/>
            <person name="Somerville C.R."/>
        </authorList>
    </citation>
    <scope>TISSUE SPECIFICITY</scope>
</reference>
<evidence type="ECO:0000255" key="1"/>
<evidence type="ECO:0000269" key="2">
    <source>
    </source>
</evidence>
<evidence type="ECO:0000305" key="3"/>
<name>CSLB5_ARATH</name>
<organism>
    <name type="scientific">Arabidopsis thaliana</name>
    <name type="common">Mouse-ear cress</name>
    <dbReference type="NCBI Taxonomy" id="3702"/>
    <lineage>
        <taxon>Eukaryota</taxon>
        <taxon>Viridiplantae</taxon>
        <taxon>Streptophyta</taxon>
        <taxon>Embryophyta</taxon>
        <taxon>Tracheophyta</taxon>
        <taxon>Spermatophyta</taxon>
        <taxon>Magnoliopsida</taxon>
        <taxon>eudicotyledons</taxon>
        <taxon>Gunneridae</taxon>
        <taxon>Pentapetalae</taxon>
        <taxon>rosids</taxon>
        <taxon>malvids</taxon>
        <taxon>Brassicales</taxon>
        <taxon>Brassicaceae</taxon>
        <taxon>Camelineae</taxon>
        <taxon>Arabidopsis</taxon>
    </lineage>
</organism>
<proteinExistence type="evidence at transcript level"/>
<accession>Q0WT40</accession>
<accession>O23383</accession>
<accession>Q7XA79</accession>
<feature type="chain" id="PRO_0000319339" description="Cellulose synthase-like protein B5">
    <location>
        <begin position="1"/>
        <end position="757"/>
    </location>
</feature>
<feature type="transmembrane region" description="Helical" evidence="1">
    <location>
        <begin position="24"/>
        <end position="44"/>
    </location>
</feature>
<feature type="transmembrane region" description="Helical" evidence="1">
    <location>
        <begin position="50"/>
        <end position="70"/>
    </location>
</feature>
<feature type="transmembrane region" description="Helical" evidence="1">
    <location>
        <begin position="531"/>
        <end position="551"/>
    </location>
</feature>
<feature type="transmembrane region" description="Helical" evidence="1">
    <location>
        <begin position="572"/>
        <end position="592"/>
    </location>
</feature>
<feature type="transmembrane region" description="Helical" evidence="1">
    <location>
        <begin position="613"/>
        <end position="633"/>
    </location>
</feature>
<feature type="transmembrane region" description="Helical" evidence="1">
    <location>
        <begin position="671"/>
        <end position="691"/>
    </location>
</feature>
<feature type="transmembrane region" description="Helical" evidence="1">
    <location>
        <begin position="704"/>
        <end position="724"/>
    </location>
</feature>
<feature type="transmembrane region" description="Helical" evidence="1">
    <location>
        <begin position="735"/>
        <end position="755"/>
    </location>
</feature>
<feature type="active site" evidence="1">
    <location>
        <position position="136"/>
    </location>
</feature>
<feature type="active site" evidence="1">
    <location>
        <position position="460"/>
    </location>
</feature>
<feature type="sequence conflict" description="In Ref. 4; BAE99708 and 5; AAQ22621." evidence="3" ref="4 5">
    <original>Y</original>
    <variation>H</variation>
    <location>
        <position position="256"/>
    </location>
</feature>
<feature type="sequence conflict" description="In Ref. 5; AAQ22621." evidence="3" ref="5">
    <original>M</original>
    <variation>T</variation>
    <location>
        <position position="297"/>
    </location>
</feature>
<feature type="sequence conflict" description="In Ref. 4; BAE99708." evidence="3" ref="4">
    <original>K</original>
    <variation>E</variation>
    <location>
        <position position="757"/>
    </location>
</feature>
<keyword id="KW-0961">Cell wall biogenesis/degradation</keyword>
<keyword id="KW-0328">Glycosyltransferase</keyword>
<keyword id="KW-0333">Golgi apparatus</keyword>
<keyword id="KW-0472">Membrane</keyword>
<keyword id="KW-1185">Reference proteome</keyword>
<keyword id="KW-0808">Transferase</keyword>
<keyword id="KW-0812">Transmembrane</keyword>
<keyword id="KW-1133">Transmembrane helix</keyword>
<gene>
    <name type="primary">CSLB5</name>
    <name type="ordered locus">At4g15290</name>
    <name type="ORF">dl3690c</name>
    <name type="ORF">FCAALL.256</name>
</gene>
<comment type="function">
    <text>Thought to be a Golgi-localized beta-glycan synthase that polymerize the backbones of noncellulosic polysaccharides (hemicelluloses) of plant cell wall.</text>
</comment>
<comment type="subcellular location">
    <subcellularLocation>
        <location evidence="3">Golgi apparatus membrane</location>
        <topology evidence="3">Multi-pass membrane protein</topology>
    </subcellularLocation>
</comment>
<comment type="tissue specificity">
    <text evidence="2">Expressed in young seedlings, primarily in the vascular tissue. Expressed in the root cap.</text>
</comment>
<comment type="similarity">
    <text evidence="3">Belongs to the glycosyltransferase 2 family. Plant cellulose synthase-like B subfamily.</text>
</comment>
<comment type="sequence caution" evidence="3">
    <conflict type="erroneous gene model prediction">
        <sequence resource="EMBL-CDS" id="CAB10308"/>
    </conflict>
</comment>
<comment type="sequence caution" evidence="3">
    <conflict type="erroneous gene model prediction">
        <sequence resource="EMBL-CDS" id="CAB78571"/>
    </conflict>
</comment>
<protein>
    <recommendedName>
        <fullName>Cellulose synthase-like protein B5</fullName>
        <shortName>AtCslB5</shortName>
        <ecNumber>2.4.1.-</ecNumber>
    </recommendedName>
</protein>